<evidence type="ECO:0000255" key="1"/>
<evidence type="ECO:0000305" key="2"/>
<reference key="1">
    <citation type="journal article" date="1998" name="Science">
        <title>Complete genome sequence of Treponema pallidum, the syphilis spirochete.</title>
        <authorList>
            <person name="Fraser C.M."/>
            <person name="Norris S.J."/>
            <person name="Weinstock G.M."/>
            <person name="White O."/>
            <person name="Sutton G.G."/>
            <person name="Dodson R.J."/>
            <person name="Gwinn M.L."/>
            <person name="Hickey E.K."/>
            <person name="Clayton R.A."/>
            <person name="Ketchum K.A."/>
            <person name="Sodergren E."/>
            <person name="Hardham J.M."/>
            <person name="McLeod M.P."/>
            <person name="Salzberg S.L."/>
            <person name="Peterson J.D."/>
            <person name="Khalak H.G."/>
            <person name="Richardson D.L."/>
            <person name="Howell J.K."/>
            <person name="Chidambaram M."/>
            <person name="Utterback T.R."/>
            <person name="McDonald L.A."/>
            <person name="Artiach P."/>
            <person name="Bowman C."/>
            <person name="Cotton M.D."/>
            <person name="Fujii C."/>
            <person name="Garland S.A."/>
            <person name="Hatch B."/>
            <person name="Horst K."/>
            <person name="Roberts K.M."/>
            <person name="Sandusky M."/>
            <person name="Weidman J.F."/>
            <person name="Smith H.O."/>
            <person name="Venter J.C."/>
        </authorList>
    </citation>
    <scope>NUCLEOTIDE SEQUENCE [LARGE SCALE GENOMIC DNA]</scope>
    <source>
        <strain>Nichols</strain>
    </source>
</reference>
<comment type="subcellular location">
    <subcellularLocation>
        <location evidence="2">Cell membrane</location>
        <topology evidence="2">Multi-pass membrane protein</topology>
    </subcellularLocation>
</comment>
<gene>
    <name type="ordered locus">TP_0708</name>
</gene>
<name>Y708_TREPA</name>
<organism>
    <name type="scientific">Treponema pallidum (strain Nichols)</name>
    <dbReference type="NCBI Taxonomy" id="243276"/>
    <lineage>
        <taxon>Bacteria</taxon>
        <taxon>Pseudomonadati</taxon>
        <taxon>Spirochaetota</taxon>
        <taxon>Spirochaetia</taxon>
        <taxon>Spirochaetales</taxon>
        <taxon>Treponemataceae</taxon>
        <taxon>Treponema</taxon>
    </lineage>
</organism>
<keyword id="KW-1003">Cell membrane</keyword>
<keyword id="KW-0472">Membrane</keyword>
<keyword id="KW-1185">Reference proteome</keyword>
<keyword id="KW-0812">Transmembrane</keyword>
<keyword id="KW-1133">Transmembrane helix</keyword>
<protein>
    <recommendedName>
        <fullName>Uncharacterized protein TP_0708</fullName>
    </recommendedName>
</protein>
<feature type="chain" id="PRO_0000202309" description="Uncharacterized protein TP_0708">
    <location>
        <begin position="1"/>
        <end position="171"/>
    </location>
</feature>
<feature type="transmembrane region" description="Helical" evidence="1">
    <location>
        <begin position="13"/>
        <end position="35"/>
    </location>
</feature>
<feature type="transmembrane region" description="Helical" evidence="1">
    <location>
        <begin position="50"/>
        <end position="72"/>
    </location>
</feature>
<sequence length="171" mass="17961">MDVQERRFSCAAVGASLKVPAIAAGAAFFLSIATAAVARNARVYVSVARATVLALGAGVTAYALRALLAYVVPDLLVQEDGKMPIPHVDLTLDDVVEPSFASPGGDVVQETDDSFDSLIPTGELGELGYSFSPSTPSFEDKTSDLVGDVLTDLPETKRMARAIRTVLSQDT</sequence>
<proteinExistence type="predicted"/>
<dbReference type="EMBL" id="AE000520">
    <property type="protein sequence ID" value="AAC65695.1"/>
    <property type="molecule type" value="Genomic_DNA"/>
</dbReference>
<dbReference type="PIR" id="H71289">
    <property type="entry name" value="H71289"/>
</dbReference>
<dbReference type="RefSeq" id="WP_010882153.1">
    <property type="nucleotide sequence ID" value="NC_021490.2"/>
</dbReference>
<dbReference type="IntAct" id="O83706">
    <property type="interactions" value="15"/>
</dbReference>
<dbReference type="STRING" id="243276.TP_0708"/>
<dbReference type="EnsemblBacteria" id="AAC65695">
    <property type="protein sequence ID" value="AAC65695"/>
    <property type="gene ID" value="TP_0708"/>
</dbReference>
<dbReference type="KEGG" id="tpa:TP_0708"/>
<dbReference type="KEGG" id="tpw:TPANIC_0708"/>
<dbReference type="HOGENOM" id="CLU_1562198_0_0_12"/>
<dbReference type="Proteomes" id="UP000000811">
    <property type="component" value="Chromosome"/>
</dbReference>
<dbReference type="GO" id="GO:0005886">
    <property type="term" value="C:plasma membrane"/>
    <property type="evidence" value="ECO:0007669"/>
    <property type="project" value="UniProtKB-SubCell"/>
</dbReference>
<accession>O83706</accession>